<proteinExistence type="predicted"/>
<feature type="chain" id="PRO_0000202209" description="Uncharacterized protein TP_0178">
    <location>
        <begin position="1"/>
        <end position="308"/>
    </location>
</feature>
<sequence length="308" mass="34684">MGLIARASRIRRSSGVSCEYYRLELQFVQLVESLGIPRAGFLFLTEERMFDLRFPFGIDTTTFYRMRVPTSLLSPGLPAEQWTTLFRQELTELQGYFSSHLFSTLRALHLYPFSAGSVRVYLVLFDTRTDVEEGALAADLHGDASGEERVRSFILAVQARFSFIEASRPVYPRQPELAPSCSQLEFALNNQRMANLFTISINQSALPPAVLQEELSMVRRCCALSNQLLTLVGNDNLASCVASRELRVVVFSSFPVDPELYLNQLTRGVSAYFVNHAENSLLITSSGTTRAQTDVLRFLQYETGETCR</sequence>
<gene>
    <name type="ordered locus">TP_0178</name>
</gene>
<dbReference type="EMBL" id="AE000520">
    <property type="protein sequence ID" value="AAC65192.1"/>
    <property type="molecule type" value="Genomic_DNA"/>
</dbReference>
<dbReference type="PIR" id="D71353">
    <property type="entry name" value="D71353"/>
</dbReference>
<dbReference type="RefSeq" id="WP_010881625.1">
    <property type="nucleotide sequence ID" value="NC_021490.2"/>
</dbReference>
<dbReference type="STRING" id="243276.TP_0178"/>
<dbReference type="EnsemblBacteria" id="AAC65192">
    <property type="protein sequence ID" value="AAC65192"/>
    <property type="gene ID" value="TP_0178"/>
</dbReference>
<dbReference type="KEGG" id="tpa:TP_0178"/>
<dbReference type="KEGG" id="tpw:TPANIC_0178"/>
<dbReference type="eggNOG" id="ENOG5030KHU">
    <property type="taxonomic scope" value="Bacteria"/>
</dbReference>
<dbReference type="HOGENOM" id="CLU_902963_0_0_12"/>
<dbReference type="Proteomes" id="UP000000811">
    <property type="component" value="Chromosome"/>
</dbReference>
<protein>
    <recommendedName>
        <fullName>Uncharacterized protein TP_0178</fullName>
    </recommendedName>
</protein>
<organism>
    <name type="scientific">Treponema pallidum (strain Nichols)</name>
    <dbReference type="NCBI Taxonomy" id="243276"/>
    <lineage>
        <taxon>Bacteria</taxon>
        <taxon>Pseudomonadati</taxon>
        <taxon>Spirochaetota</taxon>
        <taxon>Spirochaetia</taxon>
        <taxon>Spirochaetales</taxon>
        <taxon>Treponemataceae</taxon>
        <taxon>Treponema</taxon>
    </lineage>
</organism>
<accession>O83208</accession>
<name>Y178_TREPA</name>
<reference key="1">
    <citation type="journal article" date="1998" name="Science">
        <title>Complete genome sequence of Treponema pallidum, the syphilis spirochete.</title>
        <authorList>
            <person name="Fraser C.M."/>
            <person name="Norris S.J."/>
            <person name="Weinstock G.M."/>
            <person name="White O."/>
            <person name="Sutton G.G."/>
            <person name="Dodson R.J."/>
            <person name="Gwinn M.L."/>
            <person name="Hickey E.K."/>
            <person name="Clayton R.A."/>
            <person name="Ketchum K.A."/>
            <person name="Sodergren E."/>
            <person name="Hardham J.M."/>
            <person name="McLeod M.P."/>
            <person name="Salzberg S.L."/>
            <person name="Peterson J.D."/>
            <person name="Khalak H.G."/>
            <person name="Richardson D.L."/>
            <person name="Howell J.K."/>
            <person name="Chidambaram M."/>
            <person name="Utterback T.R."/>
            <person name="McDonald L.A."/>
            <person name="Artiach P."/>
            <person name="Bowman C."/>
            <person name="Cotton M.D."/>
            <person name="Fujii C."/>
            <person name="Garland S.A."/>
            <person name="Hatch B."/>
            <person name="Horst K."/>
            <person name="Roberts K.M."/>
            <person name="Sandusky M."/>
            <person name="Weidman J.F."/>
            <person name="Smith H.O."/>
            <person name="Venter J.C."/>
        </authorList>
    </citation>
    <scope>NUCLEOTIDE SEQUENCE [LARGE SCALE GENOMIC DNA]</scope>
    <source>
        <strain>Nichols</strain>
    </source>
</reference>
<keyword id="KW-1185">Reference proteome</keyword>